<organism>
    <name type="scientific">Solibacter usitatus (strain Ellin6076)</name>
    <dbReference type="NCBI Taxonomy" id="234267"/>
    <lineage>
        <taxon>Bacteria</taxon>
        <taxon>Pseudomonadati</taxon>
        <taxon>Acidobacteriota</taxon>
        <taxon>Terriglobia</taxon>
        <taxon>Bryobacterales</taxon>
        <taxon>Solibacteraceae</taxon>
        <taxon>Candidatus Solibacter</taxon>
    </lineage>
</organism>
<reference key="1">
    <citation type="journal article" date="2009" name="Appl. Environ. Microbiol.">
        <title>Three genomes from the phylum Acidobacteria provide insight into the lifestyles of these microorganisms in soils.</title>
        <authorList>
            <person name="Ward N.L."/>
            <person name="Challacombe J.F."/>
            <person name="Janssen P.H."/>
            <person name="Henrissat B."/>
            <person name="Coutinho P.M."/>
            <person name="Wu M."/>
            <person name="Xie G."/>
            <person name="Haft D.H."/>
            <person name="Sait M."/>
            <person name="Badger J."/>
            <person name="Barabote R.D."/>
            <person name="Bradley B."/>
            <person name="Brettin T.S."/>
            <person name="Brinkac L.M."/>
            <person name="Bruce D."/>
            <person name="Creasy T."/>
            <person name="Daugherty S.C."/>
            <person name="Davidsen T.M."/>
            <person name="DeBoy R.T."/>
            <person name="Detter J.C."/>
            <person name="Dodson R.J."/>
            <person name="Durkin A.S."/>
            <person name="Ganapathy A."/>
            <person name="Gwinn-Giglio M."/>
            <person name="Han C.S."/>
            <person name="Khouri H."/>
            <person name="Kiss H."/>
            <person name="Kothari S.P."/>
            <person name="Madupu R."/>
            <person name="Nelson K.E."/>
            <person name="Nelson W.C."/>
            <person name="Paulsen I."/>
            <person name="Penn K."/>
            <person name="Ren Q."/>
            <person name="Rosovitz M.J."/>
            <person name="Selengut J.D."/>
            <person name="Shrivastava S."/>
            <person name="Sullivan S.A."/>
            <person name="Tapia R."/>
            <person name="Thompson L.S."/>
            <person name="Watkins K.L."/>
            <person name="Yang Q."/>
            <person name="Yu C."/>
            <person name="Zafar N."/>
            <person name="Zhou L."/>
            <person name="Kuske C.R."/>
        </authorList>
    </citation>
    <scope>NUCLEOTIDE SEQUENCE [LARGE SCALE GENOMIC DNA]</scope>
    <source>
        <strain>Ellin6076</strain>
    </source>
</reference>
<name>RL17_SOLUE</name>
<sequence length="150" mass="16885">MRHKVAGYKLKRDTAGRNSLLRNLATSVIEAERIVTTVTKAKAVRPLVEHMITLAKTDTLHSRRQAAAVLRTPESVKKLFDTLGTRFGQRNGGYTRIVKLGPRKGDGAEQAMIELVGSELVKRAADRAKRREERLKAQREGRDHEEETDE</sequence>
<dbReference type="EMBL" id="CP000473">
    <property type="protein sequence ID" value="ABJ86044.1"/>
    <property type="molecule type" value="Genomic_DNA"/>
</dbReference>
<dbReference type="SMR" id="Q01WC1"/>
<dbReference type="FunCoup" id="Q01WC1">
    <property type="interactions" value="737"/>
</dbReference>
<dbReference type="STRING" id="234267.Acid_5089"/>
<dbReference type="KEGG" id="sus:Acid_5089"/>
<dbReference type="eggNOG" id="COG0203">
    <property type="taxonomic scope" value="Bacteria"/>
</dbReference>
<dbReference type="HOGENOM" id="CLU_074407_0_1_0"/>
<dbReference type="InParanoid" id="Q01WC1"/>
<dbReference type="OrthoDB" id="9809073at2"/>
<dbReference type="GO" id="GO:0022625">
    <property type="term" value="C:cytosolic large ribosomal subunit"/>
    <property type="evidence" value="ECO:0007669"/>
    <property type="project" value="TreeGrafter"/>
</dbReference>
<dbReference type="GO" id="GO:0003735">
    <property type="term" value="F:structural constituent of ribosome"/>
    <property type="evidence" value="ECO:0007669"/>
    <property type="project" value="InterPro"/>
</dbReference>
<dbReference type="GO" id="GO:0006412">
    <property type="term" value="P:translation"/>
    <property type="evidence" value="ECO:0007669"/>
    <property type="project" value="UniProtKB-UniRule"/>
</dbReference>
<dbReference type="Gene3D" id="3.90.1030.10">
    <property type="entry name" value="Ribosomal protein L17"/>
    <property type="match status" value="1"/>
</dbReference>
<dbReference type="HAMAP" id="MF_01368">
    <property type="entry name" value="Ribosomal_bL17"/>
    <property type="match status" value="1"/>
</dbReference>
<dbReference type="InterPro" id="IPR000456">
    <property type="entry name" value="Ribosomal_bL17"/>
</dbReference>
<dbReference type="InterPro" id="IPR047859">
    <property type="entry name" value="Ribosomal_bL17_CS"/>
</dbReference>
<dbReference type="InterPro" id="IPR036373">
    <property type="entry name" value="Ribosomal_bL17_sf"/>
</dbReference>
<dbReference type="NCBIfam" id="TIGR00059">
    <property type="entry name" value="L17"/>
    <property type="match status" value="1"/>
</dbReference>
<dbReference type="PANTHER" id="PTHR14413:SF16">
    <property type="entry name" value="LARGE RIBOSOMAL SUBUNIT PROTEIN BL17M"/>
    <property type="match status" value="1"/>
</dbReference>
<dbReference type="PANTHER" id="PTHR14413">
    <property type="entry name" value="RIBOSOMAL PROTEIN L17"/>
    <property type="match status" value="1"/>
</dbReference>
<dbReference type="Pfam" id="PF01196">
    <property type="entry name" value="Ribosomal_L17"/>
    <property type="match status" value="1"/>
</dbReference>
<dbReference type="SUPFAM" id="SSF64263">
    <property type="entry name" value="Prokaryotic ribosomal protein L17"/>
    <property type="match status" value="1"/>
</dbReference>
<dbReference type="PROSITE" id="PS01167">
    <property type="entry name" value="RIBOSOMAL_L17"/>
    <property type="match status" value="1"/>
</dbReference>
<comment type="subunit">
    <text evidence="1">Part of the 50S ribosomal subunit. Contacts protein L32.</text>
</comment>
<comment type="similarity">
    <text evidence="1">Belongs to the bacterial ribosomal protein bL17 family.</text>
</comment>
<evidence type="ECO:0000255" key="1">
    <source>
        <dbReference type="HAMAP-Rule" id="MF_01368"/>
    </source>
</evidence>
<evidence type="ECO:0000256" key="2">
    <source>
        <dbReference type="SAM" id="MobiDB-lite"/>
    </source>
</evidence>
<evidence type="ECO:0000305" key="3"/>
<proteinExistence type="inferred from homology"/>
<protein>
    <recommendedName>
        <fullName evidence="1">Large ribosomal subunit protein bL17</fullName>
    </recommendedName>
    <alternativeName>
        <fullName evidence="3">50S ribosomal protein L17</fullName>
    </alternativeName>
</protein>
<accession>Q01WC1</accession>
<feature type="chain" id="PRO_1000068028" description="Large ribosomal subunit protein bL17">
    <location>
        <begin position="1"/>
        <end position="150"/>
    </location>
</feature>
<feature type="region of interest" description="Disordered" evidence="2">
    <location>
        <begin position="126"/>
        <end position="150"/>
    </location>
</feature>
<gene>
    <name evidence="1" type="primary">rplQ</name>
    <name type="ordered locus">Acid_5089</name>
</gene>
<keyword id="KW-0687">Ribonucleoprotein</keyword>
<keyword id="KW-0689">Ribosomal protein</keyword>